<keyword id="KW-1185">Reference proteome</keyword>
<dbReference type="EMBL" id="CU329671">
    <property type="protein sequence ID" value="CCD31384.1"/>
    <property type="molecule type" value="Genomic_DNA"/>
</dbReference>
<dbReference type="RefSeq" id="XP_004001732.1">
    <property type="nucleotide sequence ID" value="XM_004001683.1"/>
</dbReference>
<dbReference type="iPTMnet" id="G2TRQ0"/>
<dbReference type="PaxDb" id="4896-SPBC56F2.15.1"/>
<dbReference type="EnsemblFungi" id="SPBC56F2.15.1">
    <property type="protein sequence ID" value="SPBC56F2.15.1:pep"/>
    <property type="gene ID" value="SPBC56F2.15"/>
</dbReference>
<dbReference type="PomBase" id="SPBC56F2.15">
    <property type="gene designation" value="tam13"/>
</dbReference>
<dbReference type="VEuPathDB" id="FungiDB:SPBC56F2.15"/>
<dbReference type="HOGENOM" id="CLU_2360955_0_0_1"/>
<dbReference type="InParanoid" id="G2TRQ0"/>
<dbReference type="OMA" id="KMAIMNR"/>
<dbReference type="PRO" id="PR:G2TRQ0"/>
<dbReference type="Proteomes" id="UP000002485">
    <property type="component" value="Chromosome II"/>
</dbReference>
<reference key="1">
    <citation type="journal article" date="2002" name="Nature">
        <title>The genome sequence of Schizosaccharomyces pombe.</title>
        <authorList>
            <person name="Wood V."/>
            <person name="Gwilliam R."/>
            <person name="Rajandream M.A."/>
            <person name="Lyne M.H."/>
            <person name="Lyne R."/>
            <person name="Stewart A."/>
            <person name="Sgouros J.G."/>
            <person name="Peat N."/>
            <person name="Hayles J."/>
            <person name="Baker S.G."/>
            <person name="Basham D."/>
            <person name="Bowman S."/>
            <person name="Brooks K."/>
            <person name="Brown D."/>
            <person name="Brown S."/>
            <person name="Chillingworth T."/>
            <person name="Churcher C.M."/>
            <person name="Collins M."/>
            <person name="Connor R."/>
            <person name="Cronin A."/>
            <person name="Davis P."/>
            <person name="Feltwell T."/>
            <person name="Fraser A."/>
            <person name="Gentles S."/>
            <person name="Goble A."/>
            <person name="Hamlin N."/>
            <person name="Harris D.E."/>
            <person name="Hidalgo J."/>
            <person name="Hodgson G."/>
            <person name="Holroyd S."/>
            <person name="Hornsby T."/>
            <person name="Howarth S."/>
            <person name="Huckle E.J."/>
            <person name="Hunt S."/>
            <person name="Jagels K."/>
            <person name="James K.D."/>
            <person name="Jones L."/>
            <person name="Jones M."/>
            <person name="Leather S."/>
            <person name="McDonald S."/>
            <person name="McLean J."/>
            <person name="Mooney P."/>
            <person name="Moule S."/>
            <person name="Mungall K.L."/>
            <person name="Murphy L.D."/>
            <person name="Niblett D."/>
            <person name="Odell C."/>
            <person name="Oliver K."/>
            <person name="O'Neil S."/>
            <person name="Pearson D."/>
            <person name="Quail M.A."/>
            <person name="Rabbinowitsch E."/>
            <person name="Rutherford K.M."/>
            <person name="Rutter S."/>
            <person name="Saunders D."/>
            <person name="Seeger K."/>
            <person name="Sharp S."/>
            <person name="Skelton J."/>
            <person name="Simmonds M.N."/>
            <person name="Squares R."/>
            <person name="Squares S."/>
            <person name="Stevens K."/>
            <person name="Taylor K."/>
            <person name="Taylor R.G."/>
            <person name="Tivey A."/>
            <person name="Walsh S.V."/>
            <person name="Warren T."/>
            <person name="Whitehead S."/>
            <person name="Woodward J.R."/>
            <person name="Volckaert G."/>
            <person name="Aert R."/>
            <person name="Robben J."/>
            <person name="Grymonprez B."/>
            <person name="Weltjens I."/>
            <person name="Vanstreels E."/>
            <person name="Rieger M."/>
            <person name="Schaefer M."/>
            <person name="Mueller-Auer S."/>
            <person name="Gabel C."/>
            <person name="Fuchs M."/>
            <person name="Duesterhoeft A."/>
            <person name="Fritzc C."/>
            <person name="Holzer E."/>
            <person name="Moestl D."/>
            <person name="Hilbert H."/>
            <person name="Borzym K."/>
            <person name="Langer I."/>
            <person name="Beck A."/>
            <person name="Lehrach H."/>
            <person name="Reinhardt R."/>
            <person name="Pohl T.M."/>
            <person name="Eger P."/>
            <person name="Zimmermann W."/>
            <person name="Wedler H."/>
            <person name="Wambutt R."/>
            <person name="Purnelle B."/>
            <person name="Goffeau A."/>
            <person name="Cadieu E."/>
            <person name="Dreano S."/>
            <person name="Gloux S."/>
            <person name="Lelaure V."/>
            <person name="Mottier S."/>
            <person name="Galibert F."/>
            <person name="Aves S.J."/>
            <person name="Xiang Z."/>
            <person name="Hunt C."/>
            <person name="Moore K."/>
            <person name="Hurst S.M."/>
            <person name="Lucas M."/>
            <person name="Rochet M."/>
            <person name="Gaillardin C."/>
            <person name="Tallada V.A."/>
            <person name="Garzon A."/>
            <person name="Thode G."/>
            <person name="Daga R.R."/>
            <person name="Cruzado L."/>
            <person name="Jimenez J."/>
            <person name="Sanchez M."/>
            <person name="del Rey F."/>
            <person name="Benito J."/>
            <person name="Dominguez A."/>
            <person name="Revuelta J.L."/>
            <person name="Moreno S."/>
            <person name="Armstrong J."/>
            <person name="Forsburg S.L."/>
            <person name="Cerutti L."/>
            <person name="Lowe T."/>
            <person name="McCombie W.R."/>
            <person name="Paulsen I."/>
            <person name="Potashkin J."/>
            <person name="Shpakovski G.V."/>
            <person name="Ussery D."/>
            <person name="Barrell B.G."/>
            <person name="Nurse P."/>
        </authorList>
    </citation>
    <scope>NUCLEOTIDE SEQUENCE [LARGE SCALE GENOMIC DNA]</scope>
    <source>
        <strain>972 / ATCC 24843</strain>
    </source>
</reference>
<reference key="2">
    <citation type="journal article" date="2011" name="Science">
        <title>Comparative functional genomics of the fission yeasts.</title>
        <authorList>
            <person name="Rhind N."/>
            <person name="Chen Z."/>
            <person name="Yassour M."/>
            <person name="Thompson D.A."/>
            <person name="Haas B.J."/>
            <person name="Habib N."/>
            <person name="Wapinski I."/>
            <person name="Roy S."/>
            <person name="Lin M.F."/>
            <person name="Heiman D.I."/>
            <person name="Young S.K."/>
            <person name="Furuya K."/>
            <person name="Guo Y."/>
            <person name="Pidoux A."/>
            <person name="Chen H.M."/>
            <person name="Robbertse B."/>
            <person name="Goldberg J.M."/>
            <person name="Aoki K."/>
            <person name="Bayne E.H."/>
            <person name="Berlin A.M."/>
            <person name="Desjardins C.A."/>
            <person name="Dobbs E."/>
            <person name="Dukaj L."/>
            <person name="Fan L."/>
            <person name="FitzGerald M.G."/>
            <person name="French C."/>
            <person name="Gujja S."/>
            <person name="Hansen K."/>
            <person name="Keifenheim D."/>
            <person name="Levin J.Z."/>
            <person name="Mosher R.A."/>
            <person name="Mueller C.A."/>
            <person name="Pfiffner J."/>
            <person name="Priest M."/>
            <person name="Russ C."/>
            <person name="Smialowska A."/>
            <person name="Swoboda P."/>
            <person name="Sykes S.M."/>
            <person name="Vaughn M."/>
            <person name="Vengrova S."/>
            <person name="Yoder R."/>
            <person name="Zeng Q."/>
            <person name="Allshire R."/>
            <person name="Baulcombe D."/>
            <person name="Birren B.W."/>
            <person name="Brown W."/>
            <person name="Ekwall K."/>
            <person name="Kellis M."/>
            <person name="Leatherwood J."/>
            <person name="Levin H."/>
            <person name="Margalit H."/>
            <person name="Martienssen R."/>
            <person name="Nieduszynski C.A."/>
            <person name="Spatafora J.W."/>
            <person name="Friedman N."/>
            <person name="Dalgaard J.Z."/>
            <person name="Baumann P."/>
            <person name="Niki H."/>
            <person name="Regev A."/>
            <person name="Nusbaum C."/>
        </authorList>
    </citation>
    <scope>IDENTIFICATION</scope>
</reference>
<reference key="3">
    <citation type="journal article" date="2011" name="Genetics">
        <title>Augmented annotation of the Schizosaccharomyces pombe genome reveals additional genes required for growth and viability.</title>
        <authorList>
            <person name="Bitton D.A."/>
            <person name="Wood V."/>
            <person name="Scutt P.J."/>
            <person name="Grallert A."/>
            <person name="Yates T."/>
            <person name="Smith D.L."/>
            <person name="Hagan I.M."/>
            <person name="Miller C.J."/>
        </authorList>
    </citation>
    <scope>IDENTIFICATION</scope>
    <scope>INDUCTION</scope>
</reference>
<name>TAM13_SCHPO</name>
<protein>
    <recommendedName>
        <fullName>Uncharacterized protein tam13</fullName>
    </recommendedName>
    <alternativeName>
        <fullName>Transcripts altered in meiosis protein 13</fullName>
    </alternativeName>
</protein>
<organism>
    <name type="scientific">Schizosaccharomyces pombe (strain 972 / ATCC 24843)</name>
    <name type="common">Fission yeast</name>
    <dbReference type="NCBI Taxonomy" id="284812"/>
    <lineage>
        <taxon>Eukaryota</taxon>
        <taxon>Fungi</taxon>
        <taxon>Dikarya</taxon>
        <taxon>Ascomycota</taxon>
        <taxon>Taphrinomycotina</taxon>
        <taxon>Schizosaccharomycetes</taxon>
        <taxon>Schizosaccharomycetales</taxon>
        <taxon>Schizosaccharomycetaceae</taxon>
        <taxon>Schizosaccharomyces</taxon>
    </lineage>
</organism>
<feature type="chain" id="PRO_0000416522" description="Uncharacterized protein tam13">
    <location>
        <begin position="1"/>
        <end position="95"/>
    </location>
</feature>
<feature type="region of interest" description="Disordered" evidence="1">
    <location>
        <begin position="1"/>
        <end position="27"/>
    </location>
</feature>
<feature type="compositionally biased region" description="Low complexity" evidence="1">
    <location>
        <begin position="1"/>
        <end position="12"/>
    </location>
</feature>
<comment type="induction">
    <text evidence="2">Differentially expressed during meiosis.</text>
</comment>
<sequence length="95" mass="10171">MQNFMNNLSGGSNKEGGEKSNDFLSSALGAEKQVKQAQTMKKISDMFPGSTSEKLAILNKINSASGGRVLETLGEIENSSSSQDEIITKLKGFLK</sequence>
<proteinExistence type="evidence at transcript level"/>
<gene>
    <name type="primary">tam13</name>
    <name type="ORF">SPBC56F2.15</name>
</gene>
<accession>G2TRQ0</accession>
<evidence type="ECO:0000256" key="1">
    <source>
        <dbReference type="SAM" id="MobiDB-lite"/>
    </source>
</evidence>
<evidence type="ECO:0000269" key="2">
    <source>
    </source>
</evidence>